<evidence type="ECO:0000255" key="1">
    <source>
        <dbReference type="HAMAP-Rule" id="MF_01663"/>
    </source>
</evidence>
<reference key="1">
    <citation type="submission" date="2008-04" db="EMBL/GenBank/DDBJ databases">
        <title>Complete sequence of Yersinia pseudotuberculosis PB1/+.</title>
        <authorList>
            <person name="Copeland A."/>
            <person name="Lucas S."/>
            <person name="Lapidus A."/>
            <person name="Glavina del Rio T."/>
            <person name="Dalin E."/>
            <person name="Tice H."/>
            <person name="Bruce D."/>
            <person name="Goodwin L."/>
            <person name="Pitluck S."/>
            <person name="Munk A.C."/>
            <person name="Brettin T."/>
            <person name="Detter J.C."/>
            <person name="Han C."/>
            <person name="Tapia R."/>
            <person name="Schmutz J."/>
            <person name="Larimer F."/>
            <person name="Land M."/>
            <person name="Hauser L."/>
            <person name="Challacombe J.F."/>
            <person name="Green L."/>
            <person name="Lindler L.E."/>
            <person name="Nikolich M.P."/>
            <person name="Richardson P."/>
        </authorList>
    </citation>
    <scope>NUCLEOTIDE SEQUENCE [LARGE SCALE GENOMIC DNA]</scope>
    <source>
        <strain>PB1/+</strain>
    </source>
</reference>
<keyword id="KW-0119">Carbohydrate metabolism</keyword>
<keyword id="KW-0963">Cytoplasm</keyword>
<keyword id="KW-0413">Isomerase</keyword>
<keyword id="KW-0684">Rhamnose metabolism</keyword>
<dbReference type="EC" id="5.1.3.32" evidence="1"/>
<dbReference type="EMBL" id="CP001048">
    <property type="protein sequence ID" value="ACC87393.1"/>
    <property type="molecule type" value="Genomic_DNA"/>
</dbReference>
<dbReference type="RefSeq" id="WP_002209101.1">
    <property type="nucleotide sequence ID" value="NZ_CP009780.1"/>
</dbReference>
<dbReference type="SMR" id="B2K1V8"/>
<dbReference type="GeneID" id="57974279"/>
<dbReference type="KEGG" id="ypb:YPTS_0404"/>
<dbReference type="PATRIC" id="fig|502801.10.peg.4082"/>
<dbReference type="UniPathway" id="UPA00125"/>
<dbReference type="GO" id="GO:0005737">
    <property type="term" value="C:cytoplasm"/>
    <property type="evidence" value="ECO:0007669"/>
    <property type="project" value="UniProtKB-SubCell"/>
</dbReference>
<dbReference type="GO" id="GO:0062192">
    <property type="term" value="F:L-rhamnose mutarotase activity"/>
    <property type="evidence" value="ECO:0007669"/>
    <property type="project" value="UniProtKB-EC"/>
</dbReference>
<dbReference type="GO" id="GO:0019301">
    <property type="term" value="P:rhamnose catabolic process"/>
    <property type="evidence" value="ECO:0007669"/>
    <property type="project" value="TreeGrafter"/>
</dbReference>
<dbReference type="Gene3D" id="3.30.70.100">
    <property type="match status" value="1"/>
</dbReference>
<dbReference type="HAMAP" id="MF_01663">
    <property type="entry name" value="L_rham_rotase"/>
    <property type="match status" value="1"/>
</dbReference>
<dbReference type="InterPro" id="IPR011008">
    <property type="entry name" value="Dimeric_a/b-barrel"/>
</dbReference>
<dbReference type="InterPro" id="IPR013448">
    <property type="entry name" value="L-rhamnose_mutarotase"/>
</dbReference>
<dbReference type="InterPro" id="IPR008000">
    <property type="entry name" value="Rham/fucose_mutarotase"/>
</dbReference>
<dbReference type="NCBIfam" id="TIGR02625">
    <property type="entry name" value="YiiL_rotase"/>
    <property type="match status" value="1"/>
</dbReference>
<dbReference type="PANTHER" id="PTHR34389">
    <property type="entry name" value="L-RHAMNOSE MUTAROTASE"/>
    <property type="match status" value="1"/>
</dbReference>
<dbReference type="PANTHER" id="PTHR34389:SF2">
    <property type="entry name" value="L-RHAMNOSE MUTAROTASE"/>
    <property type="match status" value="1"/>
</dbReference>
<dbReference type="Pfam" id="PF05336">
    <property type="entry name" value="rhaM"/>
    <property type="match status" value="1"/>
</dbReference>
<dbReference type="SUPFAM" id="SSF54909">
    <property type="entry name" value="Dimeric alpha+beta barrel"/>
    <property type="match status" value="1"/>
</dbReference>
<comment type="function">
    <text evidence="1">Involved in the anomeric conversion of L-rhamnose.</text>
</comment>
<comment type="catalytic activity">
    <reaction evidence="1">
        <text>alpha-L-rhamnose = beta-L-rhamnose</text>
        <dbReference type="Rhea" id="RHEA:25584"/>
        <dbReference type="ChEBI" id="CHEBI:27586"/>
        <dbReference type="ChEBI" id="CHEBI:27907"/>
        <dbReference type="EC" id="5.1.3.32"/>
    </reaction>
</comment>
<comment type="pathway">
    <text evidence="1">Carbohydrate metabolism; L-rhamnose metabolism.</text>
</comment>
<comment type="subunit">
    <text evidence="1">Homodimer.</text>
</comment>
<comment type="subcellular location">
    <subcellularLocation>
        <location evidence="1">Cytoplasm</location>
    </subcellularLocation>
</comment>
<comment type="similarity">
    <text evidence="1">Belongs to the rhamnose mutarotase family.</text>
</comment>
<proteinExistence type="inferred from homology"/>
<feature type="chain" id="PRO_0000344617" description="L-rhamnose mutarotase">
    <location>
        <begin position="1"/>
        <end position="104"/>
    </location>
</feature>
<feature type="active site" description="Proton donor" evidence="1">
    <location>
        <position position="22"/>
    </location>
</feature>
<feature type="binding site" evidence="1">
    <location>
        <position position="18"/>
    </location>
    <ligand>
        <name>substrate</name>
    </ligand>
</feature>
<feature type="binding site" evidence="1">
    <location>
        <position position="41"/>
    </location>
    <ligand>
        <name>substrate</name>
    </ligand>
</feature>
<feature type="binding site" evidence="1">
    <location>
        <begin position="76"/>
        <end position="77"/>
    </location>
    <ligand>
        <name>substrate</name>
    </ligand>
</feature>
<accession>B2K1V8</accession>
<sequence length="104" mass="12198">MIRKAFVMAVNPDAHAEYQRRHTPIWPELESVLKAHGAHHYSIFLDETRNLLFGVVEIESEERWNAVAQTAECQRWWQHMADVMPSHPDNSPVSQALREVFYLE</sequence>
<gene>
    <name evidence="1" type="primary">rhaM</name>
    <name type="ordered locus">YPTS_0404</name>
</gene>
<protein>
    <recommendedName>
        <fullName evidence="1">L-rhamnose mutarotase</fullName>
        <ecNumber evidence="1">5.1.3.32</ecNumber>
    </recommendedName>
    <alternativeName>
        <fullName evidence="1">Rhamnose 1-epimerase</fullName>
    </alternativeName>
    <alternativeName>
        <fullName evidence="1">Type-3 mutarotase</fullName>
    </alternativeName>
</protein>
<organism>
    <name type="scientific">Yersinia pseudotuberculosis serotype IB (strain PB1/+)</name>
    <dbReference type="NCBI Taxonomy" id="502801"/>
    <lineage>
        <taxon>Bacteria</taxon>
        <taxon>Pseudomonadati</taxon>
        <taxon>Pseudomonadota</taxon>
        <taxon>Gammaproteobacteria</taxon>
        <taxon>Enterobacterales</taxon>
        <taxon>Yersiniaceae</taxon>
        <taxon>Yersinia</taxon>
    </lineage>
</organism>
<name>RHAM_YERPB</name>